<feature type="chain" id="PRO_0000129488" description="Large ribosomal subunit protein uL23m">
    <location>
        <begin position="1"/>
        <end position="159"/>
    </location>
</feature>
<dbReference type="EMBL" id="HE600940">
    <property type="protein sequence ID" value="CAP31524.1"/>
    <property type="molecule type" value="Genomic_DNA"/>
</dbReference>
<dbReference type="SMR" id="Q61DA8"/>
<dbReference type="FunCoup" id="Q61DA8">
    <property type="interactions" value="221"/>
</dbReference>
<dbReference type="STRING" id="6238.Q61DA8"/>
<dbReference type="EnsemblMetazoa" id="CBG12563.1">
    <property type="protein sequence ID" value="CBG12563.1"/>
    <property type="gene ID" value="WBGene00033494"/>
</dbReference>
<dbReference type="KEGG" id="cbr:CBG_12563"/>
<dbReference type="CTD" id="8582073"/>
<dbReference type="WormBase" id="CBG12563">
    <property type="protein sequence ID" value="CBP03167"/>
    <property type="gene ID" value="WBGene00033494"/>
    <property type="gene designation" value="Cbr-mrpl-23"/>
</dbReference>
<dbReference type="eggNOG" id="KOG4089">
    <property type="taxonomic scope" value="Eukaryota"/>
</dbReference>
<dbReference type="HOGENOM" id="CLU_103097_1_1_1"/>
<dbReference type="InParanoid" id="Q61DA8"/>
<dbReference type="OMA" id="QMGDITW"/>
<dbReference type="Proteomes" id="UP000008549">
    <property type="component" value="Unassembled WGS sequence"/>
</dbReference>
<dbReference type="GO" id="GO:0005762">
    <property type="term" value="C:mitochondrial large ribosomal subunit"/>
    <property type="evidence" value="ECO:0000250"/>
    <property type="project" value="UniProtKB"/>
</dbReference>
<dbReference type="GO" id="GO:0003735">
    <property type="term" value="F:structural constituent of ribosome"/>
    <property type="evidence" value="ECO:0000318"/>
    <property type="project" value="GO_Central"/>
</dbReference>
<dbReference type="GO" id="GO:0032543">
    <property type="term" value="P:mitochondrial translation"/>
    <property type="evidence" value="ECO:0000318"/>
    <property type="project" value="GO_Central"/>
</dbReference>
<dbReference type="FunFam" id="3.30.70.330:FF:000284">
    <property type="entry name" value="39S ribosomal protein L23, mitochondrial"/>
    <property type="match status" value="1"/>
</dbReference>
<dbReference type="Gene3D" id="3.30.70.330">
    <property type="match status" value="1"/>
</dbReference>
<dbReference type="InterPro" id="IPR012677">
    <property type="entry name" value="Nucleotide-bd_a/b_plait_sf"/>
</dbReference>
<dbReference type="InterPro" id="IPR013025">
    <property type="entry name" value="Ribosomal_uL23-like"/>
</dbReference>
<dbReference type="InterPro" id="IPR012678">
    <property type="entry name" value="Ribosomal_uL23/eL15/eS24_sf"/>
</dbReference>
<dbReference type="PANTHER" id="PTHR12059:SF5">
    <property type="entry name" value="LARGE RIBOSOMAL SUBUNIT PROTEIN UL23M"/>
    <property type="match status" value="1"/>
</dbReference>
<dbReference type="PANTHER" id="PTHR12059">
    <property type="entry name" value="RIBOSOMAL PROTEIN L23-RELATED"/>
    <property type="match status" value="1"/>
</dbReference>
<dbReference type="Pfam" id="PF00276">
    <property type="entry name" value="Ribosomal_L23"/>
    <property type="match status" value="1"/>
</dbReference>
<dbReference type="SUPFAM" id="SSF54189">
    <property type="entry name" value="Ribosomal proteins S24e, L23 and L15e"/>
    <property type="match status" value="1"/>
</dbReference>
<evidence type="ECO:0000250" key="1">
    <source>
        <dbReference type="UniProtKB" id="Q16540"/>
    </source>
</evidence>
<evidence type="ECO:0000305" key="2"/>
<sequence length="159" mass="18981">MTSRLARLWQPGNPQRRVFLPDFWMAVIESPSVGRNKLPRNCVKFEVDPRMSRHDIREYLTKIYDLPVRDVRTEVQMGDITWNTKLDHQYKKAMWKEEDKKIAYVFMSKDFAFSFPQMFAASEEVVELAKMTKQQEELKEKLNEQYANRNRRVGQFLAA</sequence>
<accession>Q61DA8</accession>
<accession>A8XG19</accession>
<gene>
    <name type="primary">mrpl-23</name>
    <name type="ORF">CBG12563</name>
</gene>
<organism>
    <name type="scientific">Caenorhabditis briggsae</name>
    <dbReference type="NCBI Taxonomy" id="6238"/>
    <lineage>
        <taxon>Eukaryota</taxon>
        <taxon>Metazoa</taxon>
        <taxon>Ecdysozoa</taxon>
        <taxon>Nematoda</taxon>
        <taxon>Chromadorea</taxon>
        <taxon>Rhabditida</taxon>
        <taxon>Rhabditina</taxon>
        <taxon>Rhabditomorpha</taxon>
        <taxon>Rhabditoidea</taxon>
        <taxon>Rhabditidae</taxon>
        <taxon>Peloderinae</taxon>
        <taxon>Caenorhabditis</taxon>
    </lineage>
</organism>
<proteinExistence type="inferred from homology"/>
<comment type="subunit">
    <text evidence="1">Component of the mitochondrial ribosome large subunit (39S) which comprises a 16S rRNA and about 50 distinct proteins.</text>
</comment>
<comment type="subcellular location">
    <subcellularLocation>
        <location evidence="1">Mitochondrion</location>
    </subcellularLocation>
</comment>
<comment type="similarity">
    <text evidence="2">Belongs to the universal ribosomal protein uL23 family.</text>
</comment>
<reference key="1">
    <citation type="journal article" date="2003" name="PLoS Biol.">
        <title>The genome sequence of Caenorhabditis briggsae: a platform for comparative genomics.</title>
        <authorList>
            <person name="Stein L.D."/>
            <person name="Bao Z."/>
            <person name="Blasiar D."/>
            <person name="Blumenthal T."/>
            <person name="Brent M.R."/>
            <person name="Chen N."/>
            <person name="Chinwalla A."/>
            <person name="Clarke L."/>
            <person name="Clee C."/>
            <person name="Coghlan A."/>
            <person name="Coulson A."/>
            <person name="D'Eustachio P."/>
            <person name="Fitch D.H.A."/>
            <person name="Fulton L.A."/>
            <person name="Fulton R.E."/>
            <person name="Griffiths-Jones S."/>
            <person name="Harris T.W."/>
            <person name="Hillier L.W."/>
            <person name="Kamath R."/>
            <person name="Kuwabara P.E."/>
            <person name="Mardis E.R."/>
            <person name="Marra M.A."/>
            <person name="Miner T.L."/>
            <person name="Minx P."/>
            <person name="Mullikin J.C."/>
            <person name="Plumb R.W."/>
            <person name="Rogers J."/>
            <person name="Schein J.E."/>
            <person name="Sohrmann M."/>
            <person name="Spieth J."/>
            <person name="Stajich J.E."/>
            <person name="Wei C."/>
            <person name="Willey D."/>
            <person name="Wilson R.K."/>
            <person name="Durbin R.M."/>
            <person name="Waterston R.H."/>
        </authorList>
    </citation>
    <scope>NUCLEOTIDE SEQUENCE [LARGE SCALE GENOMIC DNA]</scope>
    <source>
        <strain>AF16</strain>
    </source>
</reference>
<keyword id="KW-0496">Mitochondrion</keyword>
<keyword id="KW-1185">Reference proteome</keyword>
<keyword id="KW-0687">Ribonucleoprotein</keyword>
<keyword id="KW-0689">Ribosomal protein</keyword>
<name>RM23_CAEBR</name>
<protein>
    <recommendedName>
        <fullName evidence="2">Large ribosomal subunit protein uL23m</fullName>
    </recommendedName>
    <alternativeName>
        <fullName evidence="2">39S ribosomal protein L23, mitochondrial</fullName>
        <shortName>L23mt</shortName>
        <shortName>MRP-L23</shortName>
    </alternativeName>
</protein>